<reference key="1">
    <citation type="submission" date="2006-12" db="EMBL/GenBank/DDBJ databases">
        <title>Complete sequence of Chlorobium phaeobacteroides DSM 266.</title>
        <authorList>
            <consortium name="US DOE Joint Genome Institute"/>
            <person name="Copeland A."/>
            <person name="Lucas S."/>
            <person name="Lapidus A."/>
            <person name="Barry K."/>
            <person name="Detter J.C."/>
            <person name="Glavina del Rio T."/>
            <person name="Hammon N."/>
            <person name="Israni S."/>
            <person name="Pitluck S."/>
            <person name="Goltsman E."/>
            <person name="Schmutz J."/>
            <person name="Larimer F."/>
            <person name="Land M."/>
            <person name="Hauser L."/>
            <person name="Mikhailova N."/>
            <person name="Li T."/>
            <person name="Overmann J."/>
            <person name="Bryant D.A."/>
            <person name="Richardson P."/>
        </authorList>
    </citation>
    <scope>NUCLEOTIDE SEQUENCE [LARGE SCALE GENOMIC DNA]</scope>
    <source>
        <strain>DSM 266 / SMG 266 / 2430</strain>
    </source>
</reference>
<name>RBFA_CHLPD</name>
<organism>
    <name type="scientific">Chlorobium phaeobacteroides (strain DSM 266 / SMG 266 / 2430)</name>
    <dbReference type="NCBI Taxonomy" id="290317"/>
    <lineage>
        <taxon>Bacteria</taxon>
        <taxon>Pseudomonadati</taxon>
        <taxon>Chlorobiota</taxon>
        <taxon>Chlorobiia</taxon>
        <taxon>Chlorobiales</taxon>
        <taxon>Chlorobiaceae</taxon>
        <taxon>Chlorobium/Pelodictyon group</taxon>
        <taxon>Chlorobium</taxon>
    </lineage>
</organism>
<comment type="function">
    <text evidence="1">One of several proteins that assist in the late maturation steps of the functional core of the 30S ribosomal subunit. Associates with free 30S ribosomal subunits (but not with 30S subunits that are part of 70S ribosomes or polysomes). Required for efficient processing of 16S rRNA. May interact with the 5'-terminal helix region of 16S rRNA.</text>
</comment>
<comment type="subunit">
    <text evidence="1">Monomer. Binds 30S ribosomal subunits, but not 50S ribosomal subunits or 70S ribosomes.</text>
</comment>
<comment type="subcellular location">
    <subcellularLocation>
        <location evidence="1">Cytoplasm</location>
    </subcellularLocation>
</comment>
<comment type="similarity">
    <text evidence="1">Belongs to the RbfA family.</text>
</comment>
<sequence>MSIRTEKVASLLQQELGMILEKEFPRGGPILTVVEVKVTADLGIAKVYVSVIGSAKEQADTIEYLQQEKKNIRKILSSKIRHHFRRIPELEFYQDRLYEKADRIEQLLKEVRKEQE</sequence>
<gene>
    <name evidence="1" type="primary">rbfA</name>
    <name type="ordered locus">Cpha266_0370</name>
</gene>
<dbReference type="EMBL" id="CP000492">
    <property type="protein sequence ID" value="ABL64429.1"/>
    <property type="molecule type" value="Genomic_DNA"/>
</dbReference>
<dbReference type="RefSeq" id="WP_011744262.1">
    <property type="nucleotide sequence ID" value="NC_008639.1"/>
</dbReference>
<dbReference type="SMR" id="A1BDF2"/>
<dbReference type="STRING" id="290317.Cpha266_0370"/>
<dbReference type="KEGG" id="cph:Cpha266_0370"/>
<dbReference type="eggNOG" id="COG0858">
    <property type="taxonomic scope" value="Bacteria"/>
</dbReference>
<dbReference type="HOGENOM" id="CLU_089475_4_0_10"/>
<dbReference type="OrthoDB" id="9811910at2"/>
<dbReference type="Proteomes" id="UP000008701">
    <property type="component" value="Chromosome"/>
</dbReference>
<dbReference type="GO" id="GO:0005829">
    <property type="term" value="C:cytosol"/>
    <property type="evidence" value="ECO:0007669"/>
    <property type="project" value="TreeGrafter"/>
</dbReference>
<dbReference type="GO" id="GO:0043024">
    <property type="term" value="F:ribosomal small subunit binding"/>
    <property type="evidence" value="ECO:0007669"/>
    <property type="project" value="TreeGrafter"/>
</dbReference>
<dbReference type="GO" id="GO:0030490">
    <property type="term" value="P:maturation of SSU-rRNA"/>
    <property type="evidence" value="ECO:0007669"/>
    <property type="project" value="UniProtKB-UniRule"/>
</dbReference>
<dbReference type="Gene3D" id="3.30.300.20">
    <property type="match status" value="1"/>
</dbReference>
<dbReference type="HAMAP" id="MF_00003">
    <property type="entry name" value="RbfA"/>
    <property type="match status" value="1"/>
</dbReference>
<dbReference type="InterPro" id="IPR015946">
    <property type="entry name" value="KH_dom-like_a/b"/>
</dbReference>
<dbReference type="InterPro" id="IPR000238">
    <property type="entry name" value="RbfA"/>
</dbReference>
<dbReference type="InterPro" id="IPR023799">
    <property type="entry name" value="RbfA_dom_sf"/>
</dbReference>
<dbReference type="NCBIfam" id="TIGR00082">
    <property type="entry name" value="rbfA"/>
    <property type="match status" value="1"/>
</dbReference>
<dbReference type="PANTHER" id="PTHR33515">
    <property type="entry name" value="RIBOSOME-BINDING FACTOR A, CHLOROPLASTIC-RELATED"/>
    <property type="match status" value="1"/>
</dbReference>
<dbReference type="PANTHER" id="PTHR33515:SF1">
    <property type="entry name" value="RIBOSOME-BINDING FACTOR A, CHLOROPLASTIC-RELATED"/>
    <property type="match status" value="1"/>
</dbReference>
<dbReference type="Pfam" id="PF02033">
    <property type="entry name" value="RBFA"/>
    <property type="match status" value="1"/>
</dbReference>
<dbReference type="SUPFAM" id="SSF89919">
    <property type="entry name" value="Ribosome-binding factor A, RbfA"/>
    <property type="match status" value="1"/>
</dbReference>
<protein>
    <recommendedName>
        <fullName evidence="1">Ribosome-binding factor A</fullName>
    </recommendedName>
</protein>
<proteinExistence type="inferred from homology"/>
<evidence type="ECO:0000255" key="1">
    <source>
        <dbReference type="HAMAP-Rule" id="MF_00003"/>
    </source>
</evidence>
<keyword id="KW-0963">Cytoplasm</keyword>
<keyword id="KW-1185">Reference proteome</keyword>
<keyword id="KW-0690">Ribosome biogenesis</keyword>
<feature type="chain" id="PRO_1000000090" description="Ribosome-binding factor A">
    <location>
        <begin position="1"/>
        <end position="116"/>
    </location>
</feature>
<accession>A1BDF2</accession>